<sequence length="568" mass="61973">MNTEVLGVIAQIVLMVVLSYPLGKYIAKVYKGEKTWSDFMKPVERVMFKLSGINPNEEMNWKQFLRALLVVNLFWFLWGMVLLVTQGVLPLNPDGNVGQTAHQAFNTCISFMVNCNLQHYSGESGLTYFTQLFVIMLFQFITAATGMAAMAGIMKALAAKTTQTIGNFWNYLVLSCTRVLLPLSLVVGFILIVQGTPMGFDGKMKVTTMEGATQYVSQGPTAAIVPIKQLGTNGGGYFGVNSSHPLENPTYFANMVECWSILIIPMAMAFAFGFYLKRKKLGYSIYGVMLFAYLVGVCINVSQEMGGNPRIDEMGIAQDNGAMEGKEIRLGSAATALWSITTTVTSNGSVNGMHDSTMPLSGMMEMLNMQINTWFGGVGVGWMNYFTFIIIAVFISGLMVGRTPEFLGHKVEAREMKIASIVALLHPFIILVGTALAAYLFVHAPAFVESEGGWLNNPGYHGLSEMLYEYTSCAANNGSGFEGLGDNTWFWNYSCGIVLILGRFVPIVGQVAIAGILAKKKFIPESAGTLQTDTVTFGVMTFAVIFIVAALSFFPVHALSTIAEHLSL</sequence>
<reference key="1">
    <citation type="journal article" date="2007" name="PLoS Biol.">
        <title>Evolution of symbiotic bacteria in the distal human intestine.</title>
        <authorList>
            <person name="Xu J."/>
            <person name="Mahowald M.A."/>
            <person name="Ley R.E."/>
            <person name="Lozupone C.A."/>
            <person name="Hamady M."/>
            <person name="Martens E.C."/>
            <person name="Henrissat B."/>
            <person name="Coutinho P.M."/>
            <person name="Minx P."/>
            <person name="Latreille P."/>
            <person name="Cordum H."/>
            <person name="Van Brunt A."/>
            <person name="Kim K."/>
            <person name="Fulton R.S."/>
            <person name="Fulton L.A."/>
            <person name="Clifton S.W."/>
            <person name="Wilson R.K."/>
            <person name="Knight R.D."/>
            <person name="Gordon J.I."/>
        </authorList>
    </citation>
    <scope>NUCLEOTIDE SEQUENCE [LARGE SCALE GENOMIC DNA]</scope>
    <source>
        <strain>ATCC 8482 / DSM 1447 / JCM 5826 / CCUG 4940 / NBRC 14291 / NCTC 11154</strain>
    </source>
</reference>
<feature type="chain" id="PRO_1000114672" description="Potassium-transporting ATPase potassium-binding subunit">
    <location>
        <begin position="1"/>
        <end position="568"/>
    </location>
</feature>
<feature type="transmembrane region" description="Helical" evidence="1">
    <location>
        <begin position="3"/>
        <end position="23"/>
    </location>
</feature>
<feature type="transmembrane region" description="Helical" evidence="1">
    <location>
        <begin position="68"/>
        <end position="88"/>
    </location>
</feature>
<feature type="transmembrane region" description="Helical" evidence="1">
    <location>
        <begin position="133"/>
        <end position="153"/>
    </location>
</feature>
<feature type="transmembrane region" description="Helical" evidence="1">
    <location>
        <begin position="180"/>
        <end position="200"/>
    </location>
</feature>
<feature type="transmembrane region" description="Helical" evidence="1">
    <location>
        <begin position="256"/>
        <end position="276"/>
    </location>
</feature>
<feature type="transmembrane region" description="Helical" evidence="1">
    <location>
        <begin position="281"/>
        <end position="301"/>
    </location>
</feature>
<feature type="transmembrane region" description="Helical" evidence="1">
    <location>
        <begin position="375"/>
        <end position="395"/>
    </location>
</feature>
<feature type="transmembrane region" description="Helical" evidence="1">
    <location>
        <begin position="421"/>
        <end position="441"/>
    </location>
</feature>
<feature type="transmembrane region" description="Helical" evidence="1">
    <location>
        <begin position="497"/>
        <end position="517"/>
    </location>
</feature>
<feature type="transmembrane region" description="Helical" evidence="1">
    <location>
        <begin position="535"/>
        <end position="555"/>
    </location>
</feature>
<accession>A6L5D2</accession>
<protein>
    <recommendedName>
        <fullName evidence="1">Potassium-transporting ATPase potassium-binding subunit</fullName>
    </recommendedName>
    <alternativeName>
        <fullName evidence="1">ATP phosphohydrolase [potassium-transporting] A chain</fullName>
    </alternativeName>
    <alternativeName>
        <fullName evidence="1">Potassium-binding and translocating subunit A</fullName>
    </alternativeName>
    <alternativeName>
        <fullName evidence="1">Potassium-translocating ATPase A chain</fullName>
    </alternativeName>
</protein>
<dbReference type="EMBL" id="CP000139">
    <property type="protein sequence ID" value="ABR40896.1"/>
    <property type="molecule type" value="Genomic_DNA"/>
</dbReference>
<dbReference type="RefSeq" id="WP_005841245.1">
    <property type="nucleotide sequence ID" value="NZ_JANSWM010000071.1"/>
</dbReference>
<dbReference type="SMR" id="A6L5D2"/>
<dbReference type="STRING" id="435590.BVU_3267"/>
<dbReference type="PaxDb" id="435590-BVU_3267"/>
<dbReference type="GeneID" id="60062735"/>
<dbReference type="KEGG" id="bvu:BVU_3267"/>
<dbReference type="eggNOG" id="COG2060">
    <property type="taxonomic scope" value="Bacteria"/>
</dbReference>
<dbReference type="HOGENOM" id="CLU_018614_3_0_10"/>
<dbReference type="BioCyc" id="BVUL435590:G1G59-3388-MONOMER"/>
<dbReference type="Proteomes" id="UP000002861">
    <property type="component" value="Chromosome"/>
</dbReference>
<dbReference type="GO" id="GO:0005886">
    <property type="term" value="C:plasma membrane"/>
    <property type="evidence" value="ECO:0007669"/>
    <property type="project" value="UniProtKB-SubCell"/>
</dbReference>
<dbReference type="GO" id="GO:0008556">
    <property type="term" value="F:P-type potassium transmembrane transporter activity"/>
    <property type="evidence" value="ECO:0007669"/>
    <property type="project" value="InterPro"/>
</dbReference>
<dbReference type="GO" id="GO:0030955">
    <property type="term" value="F:potassium ion binding"/>
    <property type="evidence" value="ECO:0007669"/>
    <property type="project" value="UniProtKB-UniRule"/>
</dbReference>
<dbReference type="HAMAP" id="MF_00275">
    <property type="entry name" value="KdpA"/>
    <property type="match status" value="1"/>
</dbReference>
<dbReference type="InterPro" id="IPR004623">
    <property type="entry name" value="KdpA"/>
</dbReference>
<dbReference type="NCBIfam" id="TIGR00680">
    <property type="entry name" value="kdpA"/>
    <property type="match status" value="1"/>
</dbReference>
<dbReference type="PANTHER" id="PTHR30607">
    <property type="entry name" value="POTASSIUM-TRANSPORTING ATPASE A CHAIN"/>
    <property type="match status" value="1"/>
</dbReference>
<dbReference type="PANTHER" id="PTHR30607:SF2">
    <property type="entry name" value="POTASSIUM-TRANSPORTING ATPASE POTASSIUM-BINDING SUBUNIT"/>
    <property type="match status" value="1"/>
</dbReference>
<dbReference type="Pfam" id="PF03814">
    <property type="entry name" value="KdpA"/>
    <property type="match status" value="1"/>
</dbReference>
<dbReference type="PIRSF" id="PIRSF001294">
    <property type="entry name" value="K_ATPaseA"/>
    <property type="match status" value="1"/>
</dbReference>
<keyword id="KW-0997">Cell inner membrane</keyword>
<keyword id="KW-1003">Cell membrane</keyword>
<keyword id="KW-0406">Ion transport</keyword>
<keyword id="KW-0472">Membrane</keyword>
<keyword id="KW-0630">Potassium</keyword>
<keyword id="KW-0633">Potassium transport</keyword>
<keyword id="KW-0812">Transmembrane</keyword>
<keyword id="KW-1133">Transmembrane helix</keyword>
<keyword id="KW-0813">Transport</keyword>
<comment type="function">
    <text evidence="1">Part of the high-affinity ATP-driven potassium transport (or Kdp) system, which catalyzes the hydrolysis of ATP coupled with the electrogenic transport of potassium into the cytoplasm. This subunit binds the periplasmic potassium ions and delivers the ions to the membrane domain of KdpB through an intramembrane tunnel.</text>
</comment>
<comment type="subunit">
    <text evidence="1">The system is composed of three essential subunits: KdpA, KdpB and KdpC.</text>
</comment>
<comment type="subcellular location">
    <subcellularLocation>
        <location evidence="1">Cell inner membrane</location>
        <topology evidence="1">Multi-pass membrane protein</topology>
    </subcellularLocation>
</comment>
<comment type="similarity">
    <text evidence="1">Belongs to the KdpA family.</text>
</comment>
<proteinExistence type="inferred from homology"/>
<evidence type="ECO:0000255" key="1">
    <source>
        <dbReference type="HAMAP-Rule" id="MF_00275"/>
    </source>
</evidence>
<name>KDPA_PHOV8</name>
<gene>
    <name evidence="1" type="primary">kdpA</name>
    <name type="ordered locus">BVU_3267</name>
</gene>
<organism>
    <name type="scientific">Phocaeicola vulgatus (strain ATCC 8482 / DSM 1447 / JCM 5826 / CCUG 4940 / NBRC 14291 / NCTC 11154)</name>
    <name type="common">Bacteroides vulgatus</name>
    <dbReference type="NCBI Taxonomy" id="435590"/>
    <lineage>
        <taxon>Bacteria</taxon>
        <taxon>Pseudomonadati</taxon>
        <taxon>Bacteroidota</taxon>
        <taxon>Bacteroidia</taxon>
        <taxon>Bacteroidales</taxon>
        <taxon>Bacteroidaceae</taxon>
        <taxon>Phocaeicola</taxon>
    </lineage>
</organism>